<sequence length="263" mass="30354">MPYITKISAQKNNEERVNIFLDEKYAFSVDLDVLVKFDLRKGKELDELDIIEIQYGDDVKKGFKKALDYLSYRMRSTKEVQDHLKKKGVADSAITEILHMLKGYKYLDDREFAAAYVSTHRKTSGKGPDVLFRELKLKGIDDELIHEALSSFSFSDQVEAAVKHAEKVLKKEKKLSSKETKQAIEQHLVRKGFSFDVISAALQETDYENDDGAEREALEKQGEKAMKRYGYDGSYETKMKVKQYLFRKGFSIDLIDQFLDEKG</sequence>
<organism>
    <name type="scientific">Bacillus licheniformis (strain ATCC 14580 / DSM 13 / JCM 2505 / CCUG 7422 / NBRC 12200 / NCIMB 9375 / NCTC 10341 / NRRL NRS-1264 / Gibson 46)</name>
    <dbReference type="NCBI Taxonomy" id="279010"/>
    <lineage>
        <taxon>Bacteria</taxon>
        <taxon>Bacillati</taxon>
        <taxon>Bacillota</taxon>
        <taxon>Bacilli</taxon>
        <taxon>Bacillales</taxon>
        <taxon>Bacillaceae</taxon>
        <taxon>Bacillus</taxon>
    </lineage>
</organism>
<feature type="chain" id="PRO_1000065160" description="Regulatory protein RecX">
    <location>
        <begin position="1"/>
        <end position="263"/>
    </location>
</feature>
<protein>
    <recommendedName>
        <fullName evidence="1">Regulatory protein RecX</fullName>
    </recommendedName>
</protein>
<evidence type="ECO:0000255" key="1">
    <source>
        <dbReference type="HAMAP-Rule" id="MF_01114"/>
    </source>
</evidence>
<proteinExistence type="inferred from homology"/>
<name>RECX_BACLD</name>
<keyword id="KW-0963">Cytoplasm</keyword>
<keyword id="KW-1185">Reference proteome</keyword>
<comment type="function">
    <text evidence="1">Modulates RecA activity.</text>
</comment>
<comment type="subcellular location">
    <subcellularLocation>
        <location evidence="1">Cytoplasm</location>
    </subcellularLocation>
</comment>
<comment type="similarity">
    <text evidence="1">Belongs to the RecX family.</text>
</comment>
<dbReference type="EMBL" id="CP000002">
    <property type="protein sequence ID" value="AAU22463.1"/>
    <property type="molecule type" value="Genomic_DNA"/>
</dbReference>
<dbReference type="EMBL" id="AE017333">
    <property type="protein sequence ID" value="AAU39811.1"/>
    <property type="molecule type" value="Genomic_DNA"/>
</dbReference>
<dbReference type="RefSeq" id="WP_003179917.1">
    <property type="nucleotide sequence ID" value="NC_006322.1"/>
</dbReference>
<dbReference type="SMR" id="Q65MA3"/>
<dbReference type="STRING" id="279010.BL03032"/>
<dbReference type="GeneID" id="92862542"/>
<dbReference type="KEGG" id="bld:BLi00877"/>
<dbReference type="KEGG" id="bli:BL03032"/>
<dbReference type="eggNOG" id="COG2137">
    <property type="taxonomic scope" value="Bacteria"/>
</dbReference>
<dbReference type="HOGENOM" id="CLU_066607_4_0_9"/>
<dbReference type="Proteomes" id="UP000000606">
    <property type="component" value="Chromosome"/>
</dbReference>
<dbReference type="GO" id="GO:0005737">
    <property type="term" value="C:cytoplasm"/>
    <property type="evidence" value="ECO:0007669"/>
    <property type="project" value="UniProtKB-SubCell"/>
</dbReference>
<dbReference type="GO" id="GO:0006282">
    <property type="term" value="P:regulation of DNA repair"/>
    <property type="evidence" value="ECO:0007669"/>
    <property type="project" value="UniProtKB-UniRule"/>
</dbReference>
<dbReference type="Gene3D" id="1.10.10.10">
    <property type="entry name" value="Winged helix-like DNA-binding domain superfamily/Winged helix DNA-binding domain"/>
    <property type="match status" value="4"/>
</dbReference>
<dbReference type="HAMAP" id="MF_01114">
    <property type="entry name" value="RecX"/>
    <property type="match status" value="1"/>
</dbReference>
<dbReference type="InterPro" id="IPR053926">
    <property type="entry name" value="RecX_HTH_1st"/>
</dbReference>
<dbReference type="InterPro" id="IPR053924">
    <property type="entry name" value="RecX_HTH_2nd"/>
</dbReference>
<dbReference type="InterPro" id="IPR053925">
    <property type="entry name" value="RecX_HTH_3rd"/>
</dbReference>
<dbReference type="InterPro" id="IPR003783">
    <property type="entry name" value="Regulatory_RecX"/>
</dbReference>
<dbReference type="InterPro" id="IPR036388">
    <property type="entry name" value="WH-like_DNA-bd_sf"/>
</dbReference>
<dbReference type="NCBIfam" id="NF010733">
    <property type="entry name" value="PRK14135.1"/>
    <property type="match status" value="1"/>
</dbReference>
<dbReference type="PANTHER" id="PTHR33602">
    <property type="entry name" value="REGULATORY PROTEIN RECX FAMILY PROTEIN"/>
    <property type="match status" value="1"/>
</dbReference>
<dbReference type="PANTHER" id="PTHR33602:SF1">
    <property type="entry name" value="REGULATORY PROTEIN RECX FAMILY PROTEIN"/>
    <property type="match status" value="1"/>
</dbReference>
<dbReference type="Pfam" id="PF21982">
    <property type="entry name" value="RecX_HTH1"/>
    <property type="match status" value="1"/>
</dbReference>
<dbReference type="Pfam" id="PF02631">
    <property type="entry name" value="RecX_HTH2"/>
    <property type="match status" value="1"/>
</dbReference>
<dbReference type="Pfam" id="PF21981">
    <property type="entry name" value="RecX_HTH3"/>
    <property type="match status" value="2"/>
</dbReference>
<gene>
    <name evidence="1" type="primary">recX</name>
    <name type="ordered locus">BLi00877</name>
    <name type="ordered locus">BL03032</name>
</gene>
<reference key="1">
    <citation type="journal article" date="2004" name="J. Mol. Microbiol. Biotechnol.">
        <title>The complete genome sequence of Bacillus licheniformis DSM13, an organism with great industrial potential.</title>
        <authorList>
            <person name="Veith B."/>
            <person name="Herzberg C."/>
            <person name="Steckel S."/>
            <person name="Feesche J."/>
            <person name="Maurer K.H."/>
            <person name="Ehrenreich P."/>
            <person name="Baeumer S."/>
            <person name="Henne A."/>
            <person name="Liesegang H."/>
            <person name="Merkl R."/>
            <person name="Ehrenreich A."/>
            <person name="Gottschalk G."/>
        </authorList>
    </citation>
    <scope>NUCLEOTIDE SEQUENCE [LARGE SCALE GENOMIC DNA]</scope>
    <source>
        <strain>ATCC 14580 / DSM 13 / JCM 2505 / CCUG 7422 / NBRC 12200 / NCIMB 9375 / NCTC 10341 / NRRL NRS-1264 / Gibson 46</strain>
    </source>
</reference>
<reference key="2">
    <citation type="journal article" date="2004" name="Genome Biol.">
        <title>Complete genome sequence of the industrial bacterium Bacillus licheniformis and comparisons with closely related Bacillus species.</title>
        <authorList>
            <person name="Rey M.W."/>
            <person name="Ramaiya P."/>
            <person name="Nelson B.A."/>
            <person name="Brody-Karpin S.D."/>
            <person name="Zaretsky E.J."/>
            <person name="Tang M."/>
            <person name="Lopez de Leon A."/>
            <person name="Xiang H."/>
            <person name="Gusti V."/>
            <person name="Clausen I.G."/>
            <person name="Olsen P.B."/>
            <person name="Rasmussen M.D."/>
            <person name="Andersen J.T."/>
            <person name="Joergensen P.L."/>
            <person name="Larsen T.S."/>
            <person name="Sorokin A."/>
            <person name="Bolotin A."/>
            <person name="Lapidus A."/>
            <person name="Galleron N."/>
            <person name="Ehrlich S.D."/>
            <person name="Berka R.M."/>
        </authorList>
    </citation>
    <scope>NUCLEOTIDE SEQUENCE [LARGE SCALE GENOMIC DNA]</scope>
    <source>
        <strain>ATCC 14580 / DSM 13 / JCM 2505 / CCUG 7422 / NBRC 12200 / NCIMB 9375 / NCTC 10341 / NRRL NRS-1264 / Gibson 46</strain>
    </source>
</reference>
<accession>Q65MA3</accession>
<accession>Q62XP5</accession>